<proteinExistence type="inferred from homology"/>
<dbReference type="EC" id="7.1.1.-" evidence="1"/>
<dbReference type="EMBL" id="CP000100">
    <property type="protein sequence ID" value="ABB57374.1"/>
    <property type="molecule type" value="Genomic_DNA"/>
</dbReference>
<dbReference type="RefSeq" id="WP_011242523.1">
    <property type="nucleotide sequence ID" value="NZ_JACJTX010000003.1"/>
</dbReference>
<dbReference type="SMR" id="Q31NJ5"/>
<dbReference type="STRING" id="1140.Synpcc7942_1344"/>
<dbReference type="PaxDb" id="1140-Synpcc7942_1344"/>
<dbReference type="GeneID" id="72430205"/>
<dbReference type="KEGG" id="syf:Synpcc7942_1344"/>
<dbReference type="eggNOG" id="COG1143">
    <property type="taxonomic scope" value="Bacteria"/>
</dbReference>
<dbReference type="HOGENOM" id="CLU_122804_0_0_3"/>
<dbReference type="OrthoDB" id="9798098at2"/>
<dbReference type="BioCyc" id="MetaCyc:SYNPCC7942_1344-MONOMER"/>
<dbReference type="BioCyc" id="SYNEL:SYNPCC7942_1344-MONOMER"/>
<dbReference type="Proteomes" id="UP000889800">
    <property type="component" value="Chromosome"/>
</dbReference>
<dbReference type="GO" id="GO:0031676">
    <property type="term" value="C:plasma membrane-derived thylakoid membrane"/>
    <property type="evidence" value="ECO:0007669"/>
    <property type="project" value="UniProtKB-SubCell"/>
</dbReference>
<dbReference type="GO" id="GO:0051539">
    <property type="term" value="F:4 iron, 4 sulfur cluster binding"/>
    <property type="evidence" value="ECO:0007669"/>
    <property type="project" value="UniProtKB-KW"/>
</dbReference>
<dbReference type="GO" id="GO:0005506">
    <property type="term" value="F:iron ion binding"/>
    <property type="evidence" value="ECO:0007669"/>
    <property type="project" value="UniProtKB-UniRule"/>
</dbReference>
<dbReference type="GO" id="GO:0008137">
    <property type="term" value="F:NADH dehydrogenase (ubiquinone) activity"/>
    <property type="evidence" value="ECO:0007669"/>
    <property type="project" value="InterPro"/>
</dbReference>
<dbReference type="GO" id="GO:0048038">
    <property type="term" value="F:quinone binding"/>
    <property type="evidence" value="ECO:0007669"/>
    <property type="project" value="UniProtKB-KW"/>
</dbReference>
<dbReference type="GO" id="GO:0019684">
    <property type="term" value="P:photosynthesis, light reaction"/>
    <property type="evidence" value="ECO:0007669"/>
    <property type="project" value="UniProtKB-UniRule"/>
</dbReference>
<dbReference type="Gene3D" id="3.30.70.3270">
    <property type="match status" value="1"/>
</dbReference>
<dbReference type="HAMAP" id="MF_01351">
    <property type="entry name" value="NDH1_NuoI"/>
    <property type="match status" value="1"/>
</dbReference>
<dbReference type="InterPro" id="IPR017896">
    <property type="entry name" value="4Fe4S_Fe-S-bd"/>
</dbReference>
<dbReference type="InterPro" id="IPR017900">
    <property type="entry name" value="4Fe4S_Fe_S_CS"/>
</dbReference>
<dbReference type="InterPro" id="IPR010226">
    <property type="entry name" value="NADH_quinone_OxRdtase_chainI"/>
</dbReference>
<dbReference type="InterPro" id="IPR004497">
    <property type="entry name" value="NDHI"/>
</dbReference>
<dbReference type="NCBIfam" id="TIGR00403">
    <property type="entry name" value="ndhI"/>
    <property type="match status" value="1"/>
</dbReference>
<dbReference type="NCBIfam" id="TIGR01971">
    <property type="entry name" value="NuoI"/>
    <property type="match status" value="1"/>
</dbReference>
<dbReference type="NCBIfam" id="NF004537">
    <property type="entry name" value="PRK05888.1-3"/>
    <property type="match status" value="1"/>
</dbReference>
<dbReference type="PANTHER" id="PTHR47275">
    <property type="entry name" value="NAD(P)H-QUINONE OXIDOREDUCTASE SUBUNIT I, CHLOROPLASTIC"/>
    <property type="match status" value="1"/>
</dbReference>
<dbReference type="PANTHER" id="PTHR47275:SF1">
    <property type="entry name" value="NAD(P)H-QUINONE OXIDOREDUCTASE SUBUNIT I, CHLOROPLASTIC"/>
    <property type="match status" value="1"/>
</dbReference>
<dbReference type="Pfam" id="PF12838">
    <property type="entry name" value="Fer4_7"/>
    <property type="match status" value="1"/>
</dbReference>
<dbReference type="SUPFAM" id="SSF54862">
    <property type="entry name" value="4Fe-4S ferredoxins"/>
    <property type="match status" value="1"/>
</dbReference>
<dbReference type="PROSITE" id="PS00198">
    <property type="entry name" value="4FE4S_FER_1"/>
    <property type="match status" value="2"/>
</dbReference>
<dbReference type="PROSITE" id="PS51379">
    <property type="entry name" value="4FE4S_FER_2"/>
    <property type="match status" value="2"/>
</dbReference>
<reference key="1">
    <citation type="submission" date="2005-08" db="EMBL/GenBank/DDBJ databases">
        <title>Complete sequence of chromosome 1 of Synechococcus elongatus PCC 7942.</title>
        <authorList>
            <consortium name="US DOE Joint Genome Institute"/>
            <person name="Copeland A."/>
            <person name="Lucas S."/>
            <person name="Lapidus A."/>
            <person name="Barry K."/>
            <person name="Detter J.C."/>
            <person name="Glavina T."/>
            <person name="Hammon N."/>
            <person name="Israni S."/>
            <person name="Pitluck S."/>
            <person name="Schmutz J."/>
            <person name="Larimer F."/>
            <person name="Land M."/>
            <person name="Kyrpides N."/>
            <person name="Lykidis A."/>
            <person name="Golden S."/>
            <person name="Richardson P."/>
        </authorList>
    </citation>
    <scope>NUCLEOTIDE SEQUENCE [LARGE SCALE GENOMIC DNA]</scope>
    <source>
        <strain>ATCC 33912 / PCC 7942 / FACHB-805</strain>
    </source>
</reference>
<protein>
    <recommendedName>
        <fullName evidence="1">NAD(P)H-quinone oxidoreductase subunit I</fullName>
        <ecNumber evidence="1">7.1.1.-</ecNumber>
    </recommendedName>
    <alternativeName>
        <fullName evidence="1">NAD(P)H dehydrogenase I subunit I</fullName>
    </alternativeName>
    <alternativeName>
        <fullName evidence="1">NDH-1 subunit I</fullName>
        <shortName evidence="1">NDH-I</shortName>
    </alternativeName>
</protein>
<gene>
    <name evidence="1" type="primary">ndhI</name>
    <name type="ordered locus">Synpcc7942_1344</name>
</gene>
<organism>
    <name type="scientific">Synechococcus elongatus (strain ATCC 33912 / PCC 7942 / FACHB-805)</name>
    <name type="common">Anacystis nidulans R2</name>
    <dbReference type="NCBI Taxonomy" id="1140"/>
    <lineage>
        <taxon>Bacteria</taxon>
        <taxon>Bacillati</taxon>
        <taxon>Cyanobacteriota</taxon>
        <taxon>Cyanophyceae</taxon>
        <taxon>Synechococcales</taxon>
        <taxon>Synechococcaceae</taxon>
        <taxon>Synechococcus</taxon>
    </lineage>
</organism>
<keyword id="KW-0004">4Fe-4S</keyword>
<keyword id="KW-0408">Iron</keyword>
<keyword id="KW-0411">Iron-sulfur</keyword>
<keyword id="KW-0472">Membrane</keyword>
<keyword id="KW-0479">Metal-binding</keyword>
<keyword id="KW-0520">NAD</keyword>
<keyword id="KW-0521">NADP</keyword>
<keyword id="KW-0618">Plastoquinone</keyword>
<keyword id="KW-0874">Quinone</keyword>
<keyword id="KW-1185">Reference proteome</keyword>
<keyword id="KW-0677">Repeat</keyword>
<keyword id="KW-0793">Thylakoid</keyword>
<keyword id="KW-1278">Translocase</keyword>
<evidence type="ECO:0000255" key="1">
    <source>
        <dbReference type="HAMAP-Rule" id="MF_01351"/>
    </source>
</evidence>
<evidence type="ECO:0000256" key="2">
    <source>
        <dbReference type="SAM" id="MobiDB-lite"/>
    </source>
</evidence>
<name>NDHI_SYNE7</name>
<comment type="function">
    <text evidence="1">NDH-1 shuttles electrons from an unknown electron donor, via FMN and iron-sulfur (Fe-S) centers, to quinones in the respiratory and/or the photosynthetic chain. The immediate electron acceptor for the enzyme in this species is believed to be plastoquinone. Couples the redox reaction to proton translocation, and thus conserves the redox energy in a proton gradient.</text>
</comment>
<comment type="catalytic activity">
    <reaction evidence="1">
        <text>a plastoquinone + NADH + (n+1) H(+)(in) = a plastoquinol + NAD(+) + n H(+)(out)</text>
        <dbReference type="Rhea" id="RHEA:42608"/>
        <dbReference type="Rhea" id="RHEA-COMP:9561"/>
        <dbReference type="Rhea" id="RHEA-COMP:9562"/>
        <dbReference type="ChEBI" id="CHEBI:15378"/>
        <dbReference type="ChEBI" id="CHEBI:17757"/>
        <dbReference type="ChEBI" id="CHEBI:57540"/>
        <dbReference type="ChEBI" id="CHEBI:57945"/>
        <dbReference type="ChEBI" id="CHEBI:62192"/>
    </reaction>
</comment>
<comment type="catalytic activity">
    <reaction evidence="1">
        <text>a plastoquinone + NADPH + (n+1) H(+)(in) = a plastoquinol + NADP(+) + n H(+)(out)</text>
        <dbReference type="Rhea" id="RHEA:42612"/>
        <dbReference type="Rhea" id="RHEA-COMP:9561"/>
        <dbReference type="Rhea" id="RHEA-COMP:9562"/>
        <dbReference type="ChEBI" id="CHEBI:15378"/>
        <dbReference type="ChEBI" id="CHEBI:17757"/>
        <dbReference type="ChEBI" id="CHEBI:57783"/>
        <dbReference type="ChEBI" id="CHEBI:58349"/>
        <dbReference type="ChEBI" id="CHEBI:62192"/>
    </reaction>
</comment>
<comment type="cofactor">
    <cofactor evidence="1">
        <name>[4Fe-4S] cluster</name>
        <dbReference type="ChEBI" id="CHEBI:49883"/>
    </cofactor>
    <text evidence="1">Binds 2 [4Fe-4S] clusters per subunit.</text>
</comment>
<comment type="subunit">
    <text evidence="1">NDH-1 is composed of at least 11 different subunits.</text>
</comment>
<comment type="subcellular location">
    <subcellularLocation>
        <location evidence="1">Cellular thylakoid membrane</location>
        <topology evidence="1">Peripheral membrane protein</topology>
    </subcellularLocation>
</comment>
<comment type="similarity">
    <text evidence="1">Belongs to the complex I 23 kDa subunit family.</text>
</comment>
<sequence length="202" mass="23327">MLKFLKQVGDYAKESLQAAKAIGQGLGVTFDHMQRRPVTVQYPYEKLIPSERYRGRIHYEFDKCIACEVCVRVCPINLPVVDWVYNKETKKKDLKNYSIDFGACIFCGNCVEYCPTNCLSMTEEYELATYDRHELNYDNVALGRLPYKVTDDPMVTPFREFAYLPKGEYDPHVVPSDRPRAGQRPEELVDQYKQAAAANEEN</sequence>
<feature type="chain" id="PRO_0000245692" description="NAD(P)H-quinone oxidoreductase subunit I">
    <location>
        <begin position="1"/>
        <end position="202"/>
    </location>
</feature>
<feature type="domain" description="4Fe-4S ferredoxin-type 1" evidence="1">
    <location>
        <begin position="55"/>
        <end position="84"/>
    </location>
</feature>
<feature type="domain" description="4Fe-4S ferredoxin-type 2" evidence="1">
    <location>
        <begin position="95"/>
        <end position="124"/>
    </location>
</feature>
<feature type="region of interest" description="Disordered" evidence="2">
    <location>
        <begin position="168"/>
        <end position="202"/>
    </location>
</feature>
<feature type="compositionally biased region" description="Basic and acidic residues" evidence="2">
    <location>
        <begin position="168"/>
        <end position="187"/>
    </location>
</feature>
<feature type="binding site" evidence="1">
    <location>
        <position position="64"/>
    </location>
    <ligand>
        <name>[4Fe-4S] cluster</name>
        <dbReference type="ChEBI" id="CHEBI:49883"/>
        <label>1</label>
    </ligand>
</feature>
<feature type="binding site" evidence="1">
    <location>
        <position position="67"/>
    </location>
    <ligand>
        <name>[4Fe-4S] cluster</name>
        <dbReference type="ChEBI" id="CHEBI:49883"/>
        <label>1</label>
    </ligand>
</feature>
<feature type="binding site" evidence="1">
    <location>
        <position position="70"/>
    </location>
    <ligand>
        <name>[4Fe-4S] cluster</name>
        <dbReference type="ChEBI" id="CHEBI:49883"/>
        <label>1</label>
    </ligand>
</feature>
<feature type="binding site" evidence="1">
    <location>
        <position position="74"/>
    </location>
    <ligand>
        <name>[4Fe-4S] cluster</name>
        <dbReference type="ChEBI" id="CHEBI:49883"/>
        <label>2</label>
    </ligand>
</feature>
<feature type="binding site" evidence="1">
    <location>
        <position position="104"/>
    </location>
    <ligand>
        <name>[4Fe-4S] cluster</name>
        <dbReference type="ChEBI" id="CHEBI:49883"/>
        <label>2</label>
    </ligand>
</feature>
<feature type="binding site" evidence="1">
    <location>
        <position position="107"/>
    </location>
    <ligand>
        <name>[4Fe-4S] cluster</name>
        <dbReference type="ChEBI" id="CHEBI:49883"/>
        <label>2</label>
    </ligand>
</feature>
<feature type="binding site" evidence="1">
    <location>
        <position position="110"/>
    </location>
    <ligand>
        <name>[4Fe-4S] cluster</name>
        <dbReference type="ChEBI" id="CHEBI:49883"/>
        <label>2</label>
    </ligand>
</feature>
<feature type="binding site" evidence="1">
    <location>
        <position position="114"/>
    </location>
    <ligand>
        <name>[4Fe-4S] cluster</name>
        <dbReference type="ChEBI" id="CHEBI:49883"/>
        <label>1</label>
    </ligand>
</feature>
<accession>Q31NJ5</accession>